<keyword id="KW-0963">Cytoplasm</keyword>
<keyword id="KW-1185">Reference proteome</keyword>
<keyword id="KW-0694">RNA-binding</keyword>
<evidence type="ECO:0000255" key="1">
    <source>
        <dbReference type="HAMAP-Rule" id="MF_00023"/>
    </source>
</evidence>
<evidence type="ECO:0000256" key="2">
    <source>
        <dbReference type="SAM" id="MobiDB-lite"/>
    </source>
</evidence>
<comment type="function">
    <text evidence="1">Required for rescue of stalled ribosomes mediated by trans-translation. Binds to transfer-messenger RNA (tmRNA), required for stable association of tmRNA with ribosomes. tmRNA and SmpB together mimic tRNA shape, replacing the anticodon stem-loop with SmpB. tmRNA is encoded by the ssrA gene; the 2 termini fold to resemble tRNA(Ala) and it encodes a 'tag peptide', a short internal open reading frame. During trans-translation Ala-aminoacylated tmRNA acts like a tRNA, entering the A-site of stalled ribosomes, displacing the stalled mRNA. The ribosome then switches to translate the ORF on the tmRNA; the nascent peptide is terminated with the 'tag peptide' encoded by the tmRNA and targeted for degradation. The ribosome is freed to recommence translation, which seems to be the essential function of trans-translation.</text>
</comment>
<comment type="subcellular location">
    <subcellularLocation>
        <location evidence="1">Cytoplasm</location>
    </subcellularLocation>
    <text evidence="1">The tmRNA-SmpB complex associates with stalled 70S ribosomes.</text>
</comment>
<comment type="similarity">
    <text evidence="1">Belongs to the SmpB family.</text>
</comment>
<gene>
    <name evidence="1" type="primary">smpB</name>
    <name type="ordered locus">HNE_2799</name>
</gene>
<organism>
    <name type="scientific">Hyphomonas neptunium (strain ATCC 15444)</name>
    <dbReference type="NCBI Taxonomy" id="228405"/>
    <lineage>
        <taxon>Bacteria</taxon>
        <taxon>Pseudomonadati</taxon>
        <taxon>Pseudomonadota</taxon>
        <taxon>Alphaproteobacteria</taxon>
        <taxon>Hyphomonadales</taxon>
        <taxon>Hyphomonadaceae</taxon>
        <taxon>Hyphomonas</taxon>
    </lineage>
</organism>
<feature type="chain" id="PRO_0000331053" description="SsrA-binding protein">
    <location>
        <begin position="1"/>
        <end position="161"/>
    </location>
</feature>
<feature type="region of interest" description="Disordered" evidence="2">
    <location>
        <begin position="1"/>
        <end position="23"/>
    </location>
</feature>
<protein>
    <recommendedName>
        <fullName evidence="1">SsrA-binding protein</fullName>
    </recommendedName>
    <alternativeName>
        <fullName evidence="1">Small protein B</fullName>
    </alternativeName>
</protein>
<sequence length="161" mass="18387">MATKKNEQIKGRTDGLVAENRRSRREYSVEDTLEAGIMLVGSEVKSLREGRANIAESYASVEQGELWLINAEIQTYGGANRFNHEPRRKRKLLVSRRELSKLSQEVERAGRTIVPLKLYFNDKGRAKLLIGVATGRKAHDKREHEAKRDWARDKARIMKAG</sequence>
<dbReference type="EMBL" id="CP000158">
    <property type="protein sequence ID" value="ABI75933.1"/>
    <property type="molecule type" value="Genomic_DNA"/>
</dbReference>
<dbReference type="RefSeq" id="WP_011647775.1">
    <property type="nucleotide sequence ID" value="NC_008358.1"/>
</dbReference>
<dbReference type="SMR" id="Q0BYG5"/>
<dbReference type="STRING" id="228405.HNE_2799"/>
<dbReference type="KEGG" id="hne:HNE_2799"/>
<dbReference type="eggNOG" id="COG0691">
    <property type="taxonomic scope" value="Bacteria"/>
</dbReference>
<dbReference type="HOGENOM" id="CLU_108953_0_1_5"/>
<dbReference type="Proteomes" id="UP000001959">
    <property type="component" value="Chromosome"/>
</dbReference>
<dbReference type="GO" id="GO:0005829">
    <property type="term" value="C:cytosol"/>
    <property type="evidence" value="ECO:0007669"/>
    <property type="project" value="TreeGrafter"/>
</dbReference>
<dbReference type="GO" id="GO:0003723">
    <property type="term" value="F:RNA binding"/>
    <property type="evidence" value="ECO:0007669"/>
    <property type="project" value="UniProtKB-UniRule"/>
</dbReference>
<dbReference type="GO" id="GO:0070929">
    <property type="term" value="P:trans-translation"/>
    <property type="evidence" value="ECO:0007669"/>
    <property type="project" value="UniProtKB-UniRule"/>
</dbReference>
<dbReference type="CDD" id="cd09294">
    <property type="entry name" value="SmpB"/>
    <property type="match status" value="1"/>
</dbReference>
<dbReference type="Gene3D" id="2.40.280.10">
    <property type="match status" value="1"/>
</dbReference>
<dbReference type="HAMAP" id="MF_00023">
    <property type="entry name" value="SmpB"/>
    <property type="match status" value="1"/>
</dbReference>
<dbReference type="InterPro" id="IPR023620">
    <property type="entry name" value="SmpB"/>
</dbReference>
<dbReference type="InterPro" id="IPR000037">
    <property type="entry name" value="SsrA-bd_prot"/>
</dbReference>
<dbReference type="InterPro" id="IPR020081">
    <property type="entry name" value="SsrA-bd_prot_CS"/>
</dbReference>
<dbReference type="NCBIfam" id="NF003843">
    <property type="entry name" value="PRK05422.1"/>
    <property type="match status" value="1"/>
</dbReference>
<dbReference type="NCBIfam" id="TIGR00086">
    <property type="entry name" value="smpB"/>
    <property type="match status" value="1"/>
</dbReference>
<dbReference type="PANTHER" id="PTHR30308:SF2">
    <property type="entry name" value="SSRA-BINDING PROTEIN"/>
    <property type="match status" value="1"/>
</dbReference>
<dbReference type="PANTHER" id="PTHR30308">
    <property type="entry name" value="TMRNA-BINDING COMPONENT OF TRANS-TRANSLATION TAGGING COMPLEX"/>
    <property type="match status" value="1"/>
</dbReference>
<dbReference type="Pfam" id="PF01668">
    <property type="entry name" value="SmpB"/>
    <property type="match status" value="1"/>
</dbReference>
<dbReference type="SUPFAM" id="SSF74982">
    <property type="entry name" value="Small protein B (SmpB)"/>
    <property type="match status" value="1"/>
</dbReference>
<dbReference type="PROSITE" id="PS01317">
    <property type="entry name" value="SSRP"/>
    <property type="match status" value="1"/>
</dbReference>
<reference key="1">
    <citation type="journal article" date="2006" name="J. Bacteriol.">
        <title>Comparative genomic evidence for a close relationship between the dimorphic prosthecate bacteria Hyphomonas neptunium and Caulobacter crescentus.</title>
        <authorList>
            <person name="Badger J.H."/>
            <person name="Hoover T.R."/>
            <person name="Brun Y.V."/>
            <person name="Weiner R.M."/>
            <person name="Laub M.T."/>
            <person name="Alexandre G."/>
            <person name="Mrazek J."/>
            <person name="Ren Q."/>
            <person name="Paulsen I.T."/>
            <person name="Nelson K.E."/>
            <person name="Khouri H.M."/>
            <person name="Radune D."/>
            <person name="Sosa J."/>
            <person name="Dodson R.J."/>
            <person name="Sullivan S.A."/>
            <person name="Rosovitz M.J."/>
            <person name="Madupu R."/>
            <person name="Brinkac L.M."/>
            <person name="Durkin A.S."/>
            <person name="Daugherty S.C."/>
            <person name="Kothari S.P."/>
            <person name="Giglio M.G."/>
            <person name="Zhou L."/>
            <person name="Haft D.H."/>
            <person name="Selengut J.D."/>
            <person name="Davidsen T.M."/>
            <person name="Yang Q."/>
            <person name="Zafar N."/>
            <person name="Ward N.L."/>
        </authorList>
    </citation>
    <scope>NUCLEOTIDE SEQUENCE [LARGE SCALE GENOMIC DNA]</scope>
    <source>
        <strain>ATCC 15444</strain>
    </source>
</reference>
<accession>Q0BYG5</accession>
<proteinExistence type="inferred from homology"/>
<name>SSRP_HYPNA</name>